<protein>
    <recommendedName>
        <fullName evidence="1">Ribosomal RNA small subunit methyltransferase J</fullName>
        <ecNumber evidence="1">2.1.1.242</ecNumber>
    </recommendedName>
    <alternativeName>
        <fullName evidence="1">16S rRNA m2G1516 methyltransferase</fullName>
    </alternativeName>
    <alternativeName>
        <fullName evidence="1">rRNA (guanine-N(2)-)-methyltransferase</fullName>
    </alternativeName>
</protein>
<keyword id="KW-0963">Cytoplasm</keyword>
<keyword id="KW-0489">Methyltransferase</keyword>
<keyword id="KW-0698">rRNA processing</keyword>
<keyword id="KW-0949">S-adenosyl-L-methionine</keyword>
<keyword id="KW-0808">Transferase</keyword>
<dbReference type="EC" id="2.1.1.242" evidence="1"/>
<dbReference type="EMBL" id="CP001161">
    <property type="protein sequence ID" value="ACL30925.1"/>
    <property type="molecule type" value="Genomic_DNA"/>
</dbReference>
<dbReference type="RefSeq" id="WP_009874536.1">
    <property type="nucleotide sequence ID" value="NC_011833.1"/>
</dbReference>
<dbReference type="SMR" id="B8D8E9"/>
<dbReference type="KEGG" id="bap:BUAP5A_579"/>
<dbReference type="HOGENOM" id="CLU_076324_0_0_6"/>
<dbReference type="OrthoDB" id="3191794at2"/>
<dbReference type="Proteomes" id="UP000006904">
    <property type="component" value="Chromosome"/>
</dbReference>
<dbReference type="GO" id="GO:0005737">
    <property type="term" value="C:cytoplasm"/>
    <property type="evidence" value="ECO:0007669"/>
    <property type="project" value="UniProtKB-SubCell"/>
</dbReference>
<dbReference type="GO" id="GO:0008990">
    <property type="term" value="F:rRNA (guanine-N2-)-methyltransferase activity"/>
    <property type="evidence" value="ECO:0007669"/>
    <property type="project" value="UniProtKB-UniRule"/>
</dbReference>
<dbReference type="CDD" id="cd02440">
    <property type="entry name" value="AdoMet_MTases"/>
    <property type="match status" value="1"/>
</dbReference>
<dbReference type="Gene3D" id="3.40.50.150">
    <property type="entry name" value="Vaccinia Virus protein VP39"/>
    <property type="match status" value="1"/>
</dbReference>
<dbReference type="HAMAP" id="MF_01523">
    <property type="entry name" value="16SrRNA_methyltr_J"/>
    <property type="match status" value="1"/>
</dbReference>
<dbReference type="InterPro" id="IPR007536">
    <property type="entry name" value="16SrRNA_methylTrfase_J"/>
</dbReference>
<dbReference type="InterPro" id="IPR029063">
    <property type="entry name" value="SAM-dependent_MTases_sf"/>
</dbReference>
<dbReference type="PANTHER" id="PTHR36112">
    <property type="entry name" value="RIBOSOMAL RNA SMALL SUBUNIT METHYLTRANSFERASE J"/>
    <property type="match status" value="1"/>
</dbReference>
<dbReference type="PANTHER" id="PTHR36112:SF1">
    <property type="entry name" value="RIBOSOMAL RNA SMALL SUBUNIT METHYLTRANSFERASE J"/>
    <property type="match status" value="1"/>
</dbReference>
<dbReference type="Pfam" id="PF04445">
    <property type="entry name" value="SAM_MT"/>
    <property type="match status" value="1"/>
</dbReference>
<dbReference type="SUPFAM" id="SSF53335">
    <property type="entry name" value="S-adenosyl-L-methionine-dependent methyltransferases"/>
    <property type="match status" value="1"/>
</dbReference>
<organism>
    <name type="scientific">Buchnera aphidicola subsp. Acyrthosiphon pisum (strain 5A)</name>
    <dbReference type="NCBI Taxonomy" id="563178"/>
    <lineage>
        <taxon>Bacteria</taxon>
        <taxon>Pseudomonadati</taxon>
        <taxon>Pseudomonadota</taxon>
        <taxon>Gammaproteobacteria</taxon>
        <taxon>Enterobacterales</taxon>
        <taxon>Erwiniaceae</taxon>
        <taxon>Buchnera</taxon>
    </lineage>
</organism>
<proteinExistence type="inferred from homology"/>
<feature type="chain" id="PRO_0000383375" description="Ribosomal RNA small subunit methyltransferase J">
    <location>
        <begin position="1"/>
        <end position="246"/>
    </location>
</feature>
<feature type="binding site" evidence="1">
    <location>
        <begin position="115"/>
        <end position="116"/>
    </location>
    <ligand>
        <name>S-adenosyl-L-methionine</name>
        <dbReference type="ChEBI" id="CHEBI:59789"/>
    </ligand>
</feature>
<feature type="binding site" evidence="1">
    <location>
        <position position="169"/>
    </location>
    <ligand>
        <name>S-adenosyl-L-methionine</name>
        <dbReference type="ChEBI" id="CHEBI:59789"/>
    </ligand>
</feature>
<reference key="1">
    <citation type="journal article" date="2009" name="Science">
        <title>The dynamics and time scale of ongoing genomic erosion in symbiotic bacteria.</title>
        <authorList>
            <person name="Moran N.A."/>
            <person name="McLaughlin H.J."/>
            <person name="Sorek R."/>
        </authorList>
    </citation>
    <scope>NUCLEOTIDE SEQUENCE [LARGE SCALE GENOMIC DNA]</scope>
    <source>
        <strain>5A</strain>
    </source>
</reference>
<comment type="function">
    <text evidence="1">Specifically methylates the guanosine in position 1516 of 16S rRNA.</text>
</comment>
<comment type="catalytic activity">
    <reaction evidence="1">
        <text>guanosine(1516) in 16S rRNA + S-adenosyl-L-methionine = N(2)-methylguanosine(1516) in 16S rRNA + S-adenosyl-L-homocysteine + H(+)</text>
        <dbReference type="Rhea" id="RHEA:43220"/>
        <dbReference type="Rhea" id="RHEA-COMP:10412"/>
        <dbReference type="Rhea" id="RHEA-COMP:10413"/>
        <dbReference type="ChEBI" id="CHEBI:15378"/>
        <dbReference type="ChEBI" id="CHEBI:57856"/>
        <dbReference type="ChEBI" id="CHEBI:59789"/>
        <dbReference type="ChEBI" id="CHEBI:74269"/>
        <dbReference type="ChEBI" id="CHEBI:74481"/>
        <dbReference type="EC" id="2.1.1.242"/>
    </reaction>
</comment>
<comment type="subcellular location">
    <subcellularLocation>
        <location evidence="1">Cytoplasm</location>
    </subcellularLocation>
</comment>
<comment type="similarity">
    <text evidence="1">Belongs to the methyltransferase superfamily. RsmJ family.</text>
</comment>
<sequence length="246" mass="29252">MKIYLKFKSYNKRICKLLQLFKLEHDQNCSMGLLINHNSLELYNRDNVNQKPIKVDFTSKKNHYRCHHFRRKNEVLYRVSGIKNSYFPTVLDATAGLGNDAFIFSFLGCKVIMIERHPIVAALLKDGLQRGYQDKKIGHWLQTRLHLIVNDSLKMLEIPILQPDVIYLDPMYPFYHKKSLPKKDMQFFRQLIGHNYDSKKLLEVSRKLAKNRIIVKRPYYAKPLSEDKVNHIVTTRNHRFDIYQPF</sequence>
<evidence type="ECO:0000255" key="1">
    <source>
        <dbReference type="HAMAP-Rule" id="MF_01523"/>
    </source>
</evidence>
<gene>
    <name evidence="1" type="primary">rsmJ</name>
    <name type="ordered locus">BUAP5A_579</name>
</gene>
<name>RSMJ_BUCA5</name>
<accession>B8D8E9</accession>